<proteinExistence type="evidence at transcript level"/>
<accession>Q5AG40</accession>
<accession>A0A1D8PNL7</accession>
<accession>Q5AGH7</accession>
<gene>
    <name evidence="14" type="primary">VPS4</name>
    <name type="ordered locus">CAALFM_C503090WA</name>
    <name type="ORF">CaO19.11814</name>
    <name type="ORF">CaO19.4339</name>
</gene>
<organism>
    <name type="scientific">Candida albicans (strain SC5314 / ATCC MYA-2876)</name>
    <name type="common">Yeast</name>
    <dbReference type="NCBI Taxonomy" id="237561"/>
    <lineage>
        <taxon>Eukaryota</taxon>
        <taxon>Fungi</taxon>
        <taxon>Dikarya</taxon>
        <taxon>Ascomycota</taxon>
        <taxon>Saccharomycotina</taxon>
        <taxon>Pichiomycetes</taxon>
        <taxon>Debaryomycetaceae</taxon>
        <taxon>Candida/Lodderomyces clade</taxon>
        <taxon>Candida</taxon>
    </lineage>
</organism>
<sequence length="439" mass="48437">MSGASDFLSKGIDLVQKAIDADTATRYEEAYKLYYNGLDYLMLAIKYEKNPKSKELVKSKFTEYLTRAEQLKDHLEKQAQNKSTAESSVNGSTKAKKSNGDGNGSGDDNDDADTKKLRGALAGAILSEKPNVKWSDIAGLDAAKEALKEAVILPVKFPQLFVGNRKPTSGILLYGPPGTGKSYLAKAVATEANSTFFSVSSSDLVSKWMGESERLVKQLFTMARENKPSIIFIDEVDALCGPRGEGESEASRRIKTELLVQMNGVGNDSQGVLVLGATNIPWQLDAAVRRRFERRIYIALPDVEARTRMFEINIGDVPCECTPHDYRTLAEMTDGYSGHDVAVVVRDALMQPIRKIQQATHFKPVIDETDGKEKLTPCSPGDEGAREMNWMDLATDELKEPPLTIKDFIKAIKNNRPTVNEADIAQHVKFTEDFGQEGN</sequence>
<name>VPS4_CANAL</name>
<dbReference type="EMBL" id="CP017627">
    <property type="protein sequence ID" value="AOW29729.1"/>
    <property type="molecule type" value="Genomic_DNA"/>
</dbReference>
<dbReference type="RefSeq" id="XP_720644.1">
    <property type="nucleotide sequence ID" value="XM_715551.2"/>
</dbReference>
<dbReference type="SMR" id="Q5AG40"/>
<dbReference type="FunCoup" id="Q5AG40">
    <property type="interactions" value="1038"/>
</dbReference>
<dbReference type="STRING" id="237561.Q5AG40"/>
<dbReference type="EnsemblFungi" id="C5_03090W_A-T">
    <property type="protein sequence ID" value="C5_03090W_A-T-p1"/>
    <property type="gene ID" value="C5_03090W_A"/>
</dbReference>
<dbReference type="GeneID" id="3637703"/>
<dbReference type="KEGG" id="cal:CAALFM_C503090WA"/>
<dbReference type="CGD" id="CAL0000180282">
    <property type="gene designation" value="VPS4"/>
</dbReference>
<dbReference type="VEuPathDB" id="FungiDB:C5_03090W_A"/>
<dbReference type="eggNOG" id="KOG0739">
    <property type="taxonomic scope" value="Eukaryota"/>
</dbReference>
<dbReference type="HOGENOM" id="CLU_000688_21_2_1"/>
<dbReference type="InParanoid" id="Q5AG40"/>
<dbReference type="OrthoDB" id="29072at2759"/>
<dbReference type="PHI-base" id="PHI:2553"/>
<dbReference type="PRO" id="PR:Q5AG40"/>
<dbReference type="Proteomes" id="UP000000559">
    <property type="component" value="Chromosome 5"/>
</dbReference>
<dbReference type="GO" id="GO:1990621">
    <property type="term" value="C:ESCRT IV complex"/>
    <property type="evidence" value="ECO:0007669"/>
    <property type="project" value="EnsemblFungi"/>
</dbReference>
<dbReference type="GO" id="GO:0005886">
    <property type="term" value="C:plasma membrane"/>
    <property type="evidence" value="ECO:0007669"/>
    <property type="project" value="EnsemblFungi"/>
</dbReference>
<dbReference type="GO" id="GO:0005524">
    <property type="term" value="F:ATP binding"/>
    <property type="evidence" value="ECO:0007669"/>
    <property type="project" value="UniProtKB-KW"/>
</dbReference>
<dbReference type="GO" id="GO:0016887">
    <property type="term" value="F:ATP hydrolysis activity"/>
    <property type="evidence" value="ECO:0000318"/>
    <property type="project" value="GO_Central"/>
</dbReference>
<dbReference type="GO" id="GO:0042803">
    <property type="term" value="F:protein homodimerization activity"/>
    <property type="evidence" value="ECO:0007669"/>
    <property type="project" value="EnsemblFungi"/>
</dbReference>
<dbReference type="GO" id="GO:0097352">
    <property type="term" value="P:autophagosome maturation"/>
    <property type="evidence" value="ECO:0007669"/>
    <property type="project" value="EnsemblFungi"/>
</dbReference>
<dbReference type="GO" id="GO:0071285">
    <property type="term" value="P:cellular response to lithium ion"/>
    <property type="evidence" value="ECO:0000315"/>
    <property type="project" value="CGD"/>
</dbReference>
<dbReference type="GO" id="GO:0016197">
    <property type="term" value="P:endosomal transport"/>
    <property type="evidence" value="ECO:0000318"/>
    <property type="project" value="GO_Central"/>
</dbReference>
<dbReference type="GO" id="GO:0030447">
    <property type="term" value="P:filamentous growth"/>
    <property type="evidence" value="ECO:0000315"/>
    <property type="project" value="CGD"/>
</dbReference>
<dbReference type="GO" id="GO:0044182">
    <property type="term" value="P:filamentous growth of a population of unicellular organisms"/>
    <property type="evidence" value="ECO:0000315"/>
    <property type="project" value="CGD"/>
</dbReference>
<dbReference type="GO" id="GO:0030448">
    <property type="term" value="P:hyphal growth"/>
    <property type="evidence" value="ECO:0000315"/>
    <property type="project" value="CGD"/>
</dbReference>
<dbReference type="GO" id="GO:0070676">
    <property type="term" value="P:intralumenal vesicle formation"/>
    <property type="evidence" value="ECO:0007669"/>
    <property type="project" value="EnsemblFungi"/>
</dbReference>
<dbReference type="GO" id="GO:0045324">
    <property type="term" value="P:late endosome to vacuole transport"/>
    <property type="evidence" value="ECO:0000315"/>
    <property type="project" value="CGD"/>
</dbReference>
<dbReference type="GO" id="GO:0032511">
    <property type="term" value="P:late endosome to vacuole transport via multivesicular body sorting pathway"/>
    <property type="evidence" value="ECO:0007669"/>
    <property type="project" value="EnsemblFungi"/>
</dbReference>
<dbReference type="GO" id="GO:0090148">
    <property type="term" value="P:membrane fission"/>
    <property type="evidence" value="ECO:0007669"/>
    <property type="project" value="EnsemblFungi"/>
</dbReference>
<dbReference type="GO" id="GO:0036258">
    <property type="term" value="P:multivesicular body assembly"/>
    <property type="evidence" value="ECO:0007669"/>
    <property type="project" value="EnsemblFungi"/>
</dbReference>
<dbReference type="GO" id="GO:0045053">
    <property type="term" value="P:protein retention in Golgi apparatus"/>
    <property type="evidence" value="ECO:0007669"/>
    <property type="project" value="EnsemblFungi"/>
</dbReference>
<dbReference type="GO" id="GO:0009306">
    <property type="term" value="P:protein secretion"/>
    <property type="evidence" value="ECO:0000315"/>
    <property type="project" value="CGD"/>
</dbReference>
<dbReference type="GO" id="GO:0006623">
    <property type="term" value="P:protein targeting to vacuole"/>
    <property type="evidence" value="ECO:0000315"/>
    <property type="project" value="CGD"/>
</dbReference>
<dbReference type="GO" id="GO:0061709">
    <property type="term" value="P:reticulophagy"/>
    <property type="evidence" value="ECO:0007669"/>
    <property type="project" value="EnsemblFungi"/>
</dbReference>
<dbReference type="GO" id="GO:0016125">
    <property type="term" value="P:sterol metabolic process"/>
    <property type="evidence" value="ECO:0007669"/>
    <property type="project" value="EnsemblFungi"/>
</dbReference>
<dbReference type="GO" id="GO:0007033">
    <property type="term" value="P:vacuole organization"/>
    <property type="evidence" value="ECO:0000315"/>
    <property type="project" value="CGD"/>
</dbReference>
<dbReference type="CDD" id="cd02678">
    <property type="entry name" value="MIT_VPS4"/>
    <property type="match status" value="1"/>
</dbReference>
<dbReference type="CDD" id="cd19521">
    <property type="entry name" value="RecA-like_VPS4"/>
    <property type="match status" value="1"/>
</dbReference>
<dbReference type="FunFam" id="3.40.50.300:FF:000043">
    <property type="entry name" value="Vacuolar protein sorting-associated protein 4"/>
    <property type="match status" value="1"/>
</dbReference>
<dbReference type="FunFam" id="1.10.8.60:FF:000015">
    <property type="entry name" value="vacuolar protein sorting-associated protein 4A"/>
    <property type="match status" value="1"/>
</dbReference>
<dbReference type="FunFam" id="1.20.58.80:FF:000014">
    <property type="entry name" value="Vacuolar protein-sorting-associated protein 4"/>
    <property type="match status" value="1"/>
</dbReference>
<dbReference type="Gene3D" id="1.10.8.60">
    <property type="match status" value="1"/>
</dbReference>
<dbReference type="Gene3D" id="3.40.50.300">
    <property type="entry name" value="P-loop containing nucleotide triphosphate hydrolases"/>
    <property type="match status" value="1"/>
</dbReference>
<dbReference type="Gene3D" id="1.20.58.80">
    <property type="entry name" value="Phosphotransferase system, lactose/cellobiose-type IIA subunit"/>
    <property type="match status" value="1"/>
</dbReference>
<dbReference type="InterPro" id="IPR003593">
    <property type="entry name" value="AAA+_ATPase"/>
</dbReference>
<dbReference type="InterPro" id="IPR041569">
    <property type="entry name" value="AAA_lid_3"/>
</dbReference>
<dbReference type="InterPro" id="IPR003959">
    <property type="entry name" value="ATPase_AAA_core"/>
</dbReference>
<dbReference type="InterPro" id="IPR003960">
    <property type="entry name" value="ATPase_AAA_CS"/>
</dbReference>
<dbReference type="InterPro" id="IPR007330">
    <property type="entry name" value="MIT_dom"/>
</dbReference>
<dbReference type="InterPro" id="IPR036181">
    <property type="entry name" value="MIT_dom_sf"/>
</dbReference>
<dbReference type="InterPro" id="IPR050304">
    <property type="entry name" value="MT-severing_AAA_ATPase"/>
</dbReference>
<dbReference type="InterPro" id="IPR027417">
    <property type="entry name" value="P-loop_NTPase"/>
</dbReference>
<dbReference type="InterPro" id="IPR015415">
    <property type="entry name" value="Spast_Vps4_C"/>
</dbReference>
<dbReference type="InterPro" id="IPR045253">
    <property type="entry name" value="VPS4_MIT"/>
</dbReference>
<dbReference type="PANTHER" id="PTHR23074">
    <property type="entry name" value="AAA DOMAIN-CONTAINING"/>
    <property type="match status" value="1"/>
</dbReference>
<dbReference type="PANTHER" id="PTHR23074:SF83">
    <property type="entry name" value="VACUOLAR PROTEIN SORTING-ASSOCIATED PROTEIN 4A"/>
    <property type="match status" value="1"/>
</dbReference>
<dbReference type="Pfam" id="PF00004">
    <property type="entry name" value="AAA"/>
    <property type="match status" value="1"/>
</dbReference>
<dbReference type="Pfam" id="PF17862">
    <property type="entry name" value="AAA_lid_3"/>
    <property type="match status" value="1"/>
</dbReference>
<dbReference type="Pfam" id="PF04212">
    <property type="entry name" value="MIT"/>
    <property type="match status" value="1"/>
</dbReference>
<dbReference type="Pfam" id="PF09336">
    <property type="entry name" value="Vps4_C"/>
    <property type="match status" value="1"/>
</dbReference>
<dbReference type="SMART" id="SM00382">
    <property type="entry name" value="AAA"/>
    <property type="match status" value="1"/>
</dbReference>
<dbReference type="SMART" id="SM00745">
    <property type="entry name" value="MIT"/>
    <property type="match status" value="1"/>
</dbReference>
<dbReference type="SUPFAM" id="SSF116846">
    <property type="entry name" value="MIT domain"/>
    <property type="match status" value="1"/>
</dbReference>
<dbReference type="SUPFAM" id="SSF52540">
    <property type="entry name" value="P-loop containing nucleoside triphosphate hydrolases"/>
    <property type="match status" value="1"/>
</dbReference>
<dbReference type="PROSITE" id="PS00674">
    <property type="entry name" value="AAA"/>
    <property type="match status" value="1"/>
</dbReference>
<evidence type="ECO:0000250" key="1">
    <source>
        <dbReference type="UniProtKB" id="P52917"/>
    </source>
</evidence>
<evidence type="ECO:0000255" key="2"/>
<evidence type="ECO:0000255" key="3">
    <source>
        <dbReference type="PROSITE-ProRule" id="PRU00136"/>
    </source>
</evidence>
<evidence type="ECO:0000256" key="4">
    <source>
        <dbReference type="SAM" id="MobiDB-lite"/>
    </source>
</evidence>
<evidence type="ECO:0000269" key="5">
    <source>
    </source>
</evidence>
<evidence type="ECO:0000269" key="6">
    <source>
    </source>
</evidence>
<evidence type="ECO:0000269" key="7">
    <source>
    </source>
</evidence>
<evidence type="ECO:0000269" key="8">
    <source>
    </source>
</evidence>
<evidence type="ECO:0000269" key="9">
    <source>
    </source>
</evidence>
<evidence type="ECO:0000269" key="10">
    <source>
    </source>
</evidence>
<evidence type="ECO:0000269" key="11">
    <source>
    </source>
</evidence>
<evidence type="ECO:0000269" key="12">
    <source>
    </source>
</evidence>
<evidence type="ECO:0000269" key="13">
    <source>
    </source>
</evidence>
<evidence type="ECO:0000303" key="14">
    <source>
    </source>
</evidence>
<evidence type="ECO:0000305" key="15"/>
<comment type="function">
    <text evidence="5 7 8 9 10 11 12 13">Pre-vacuolar protein sorting protein involved in the transport of biosynthetic membrane proteins from the prevacuolar/endosomal compartment to the vacuole. Required for multivesicular body (MVB) protein sorting. Catalyzes the ATP-dependent dissociation of class E VPS proteins from endosomal membranes, such as the disassembly of the ESCRT-III complex. Required for extracellular secretion of the secreted aspartyl proteases SAP2, SAP4, SAP5, and SAP6. Its regulation of the pre-vacuolar secretory pathway is critical for virulence.</text>
</comment>
<comment type="subunit">
    <text evidence="1">Monomer or homodimer (in nucleotide-free form). Decamer, dodecamer or tetradecamer of two stacked respective homooligomeric rings (when bound to ATP); the dodecameric form seems to be predominant.</text>
</comment>
<comment type="subcellular location">
    <subcellularLocation>
        <location evidence="1">Endosome membrane</location>
        <topology evidence="15">Peripheral membrane protein</topology>
    </subcellularLocation>
</comment>
<comment type="induction">
    <text evidence="6">Expression is regulated by GCN2 and GCN4.</text>
</comment>
<comment type="disruption phenotype">
    <text evidence="5 7 8 9 10 11 12 13">Leads to defects in endocytosis. Displays a characteristic class E vacuolar morphology and multilamellar structures consistent with an aberrant prevacuolar compartment. Missorts several vacuolar proteins to the extracellular space, including carboxypeptidase (CPY), vacuolar protease A (PrA), and vacuolar protease B (PrB). In addition, certain soluble secretory proteins, such as invertase and acid phosphatase, are missorted from the pre-vacuolar compartment (PVC) to the general secretory pathway prior to exocytosis. Also results in a decrease of canonically secreted proteins. Shows increased biofilm formation. Causes reduced tissue damage in an in vitro oral epithelial model (OEM) of tissue invasion, and defects in macrophage killing in vitro. Also shows attenuated virulence in an in vivo Caenorhabditis elegans model representative of intestinal epithelial infection.</text>
</comment>
<comment type="similarity">
    <text evidence="15">Belongs to the AAA ATPase family.</text>
</comment>
<keyword id="KW-0067">ATP-binding</keyword>
<keyword id="KW-0967">Endosome</keyword>
<keyword id="KW-0472">Membrane</keyword>
<keyword id="KW-0547">Nucleotide-binding</keyword>
<keyword id="KW-1185">Reference proteome</keyword>
<keyword id="KW-0843">Virulence</keyword>
<protein>
    <recommendedName>
        <fullName evidence="15">Vacuolar protein sorting-associated protein 4</fullName>
    </recommendedName>
</protein>
<reference key="1">
    <citation type="journal article" date="2004" name="Proc. Natl. Acad. Sci. U.S.A.">
        <title>The diploid genome sequence of Candida albicans.</title>
        <authorList>
            <person name="Jones T."/>
            <person name="Federspiel N.A."/>
            <person name="Chibana H."/>
            <person name="Dungan J."/>
            <person name="Kalman S."/>
            <person name="Magee B.B."/>
            <person name="Newport G."/>
            <person name="Thorstenson Y.R."/>
            <person name="Agabian N."/>
            <person name="Magee P.T."/>
            <person name="Davis R.W."/>
            <person name="Scherer S."/>
        </authorList>
    </citation>
    <scope>NUCLEOTIDE SEQUENCE [LARGE SCALE GENOMIC DNA]</scope>
    <source>
        <strain>SC5314 / ATCC MYA-2876</strain>
    </source>
</reference>
<reference key="2">
    <citation type="journal article" date="2007" name="Genome Biol.">
        <title>Assembly of the Candida albicans genome into sixteen supercontigs aligned on the eight chromosomes.</title>
        <authorList>
            <person name="van het Hoog M."/>
            <person name="Rast T.J."/>
            <person name="Martchenko M."/>
            <person name="Grindle S."/>
            <person name="Dignard D."/>
            <person name="Hogues H."/>
            <person name="Cuomo C."/>
            <person name="Berriman M."/>
            <person name="Scherer S."/>
            <person name="Magee B.B."/>
            <person name="Whiteway M."/>
            <person name="Chibana H."/>
            <person name="Nantel A."/>
            <person name="Magee P.T."/>
        </authorList>
    </citation>
    <scope>GENOME REANNOTATION</scope>
    <source>
        <strain>SC5314 / ATCC MYA-2876</strain>
    </source>
</reference>
<reference key="3">
    <citation type="journal article" date="2013" name="Genome Biol.">
        <title>Assembly of a phased diploid Candida albicans genome facilitates allele-specific measurements and provides a simple model for repeat and indel structure.</title>
        <authorList>
            <person name="Muzzey D."/>
            <person name="Schwartz K."/>
            <person name="Weissman J.S."/>
            <person name="Sherlock G."/>
        </authorList>
    </citation>
    <scope>NUCLEOTIDE SEQUENCE [LARGE SCALE GENOMIC DNA]</scope>
    <scope>GENOME REANNOTATION</scope>
    <source>
        <strain>SC5314 / ATCC MYA-2876</strain>
    </source>
</reference>
<reference key="4">
    <citation type="journal article" date="2004" name="Eukaryot. Cell">
        <title>Snf7p, a component of the ESCRT-III protein complex, is an upstream member of the RIM101 pathway in Candida albicans.</title>
        <authorList>
            <person name="Kullas A.L."/>
            <person name="Li M."/>
            <person name="Davis D.A."/>
        </authorList>
    </citation>
    <scope>FUNCTION</scope>
    <scope>DISRUPTION PHENOTYPE</scope>
</reference>
<reference key="5">
    <citation type="journal article" date="2005" name="Eukaryot. Cell">
        <title>Global role of the protein kinase Gcn2 in the human pathogen Candida albicans.</title>
        <authorList>
            <person name="Tournu H."/>
            <person name="Tripathi G."/>
            <person name="Bertram G."/>
            <person name="Macaskill S."/>
            <person name="Mavor A."/>
            <person name="Walker L."/>
            <person name="Odds F.C."/>
            <person name="Gow N.A."/>
            <person name="Brown A.J."/>
        </authorList>
    </citation>
    <scope>INDUCTION</scope>
</reference>
<reference key="6">
    <citation type="journal article" date="2007" name="FEMS Yeast Res.">
        <title>A functional analysis of the Candida albicans homolog of Saccharomyces cerevisiae VPS4.</title>
        <authorList>
            <person name="Lee S.A."/>
            <person name="Jones J."/>
            <person name="Khalique Z."/>
            <person name="Kot J."/>
            <person name="Alba M."/>
            <person name="Bernardo S."/>
            <person name="Seghal A."/>
            <person name="Wong B."/>
        </authorList>
    </citation>
    <scope>FUNCTION</scope>
    <scope>DISRUPTION PHENOTYPE</scope>
</reference>
<reference key="7">
    <citation type="journal article" date="2009" name="J. Proteomics">
        <title>A proteomic analysis of secretory proteins of a pre-vacuolar mutant of Candida albicans.</title>
        <authorList>
            <person name="Thomas D.P."/>
            <person name="Lopez-Ribot J.L."/>
            <person name="Lee S.A."/>
        </authorList>
    </citation>
    <scope>FUNCTION</scope>
    <scope>DISRUPTION PHENOTYPE</scope>
</reference>
<reference key="8">
    <citation type="journal article" date="2009" name="Mycopathologia">
        <title>Candida albicans VPS4 is required for secretion of aspartyl proteases and in vivo virulence.</title>
        <authorList>
            <person name="Lee S.A."/>
            <person name="Jones J."/>
            <person name="Hardison S."/>
            <person name="Kot J."/>
            <person name="Khalique Z."/>
            <person name="Bernardo S.M."/>
            <person name="Lazzell A."/>
            <person name="Monteagudo C."/>
            <person name="Lopez-Ribot J."/>
        </authorList>
    </citation>
    <scope>FUNCTION</scope>
    <scope>DISRUPTION PHENOTYPE</scope>
</reference>
<reference key="9">
    <citation type="journal article" date="2010" name="Eukaryot. Cell">
        <title>The Candida albicans ESCRT pathway makes Rim101-dependent and -independent contributions to pathogenesis.</title>
        <authorList>
            <person name="Wolf J.M."/>
            <person name="Johnson D.J."/>
            <person name="Chmielewski D."/>
            <person name="Davis D.A."/>
        </authorList>
    </citation>
    <scope>FUNCTION</scope>
    <scope>DISRUPTION PHENOTYPE</scope>
</reference>
<reference key="10">
    <citation type="journal article" date="2010" name="Genetics">
        <title>Mutational analysis of Candida albicans SNF7 reveals genetically separable Rim101 and ESCRT functions and demonstrates divergence in bro1-domain protein interactions.</title>
        <authorList>
            <person name="Wolf J.M."/>
            <person name="Davis D.A."/>
        </authorList>
    </citation>
    <scope>FUNCTION</scope>
    <scope>DISRUPTION PHENOTYPE</scope>
</reference>
<reference key="11">
    <citation type="journal article" date="2012" name="Eukaryot. Cell">
        <title>The beta-arrestin-like protein Rim8 is hyperphosphorylated and complexes with Rim21 and Rim101 to promote adaptation to neutral-alkaline pH.</title>
        <authorList>
            <person name="Gomez-Raja J."/>
            <person name="Davis D.A."/>
        </authorList>
    </citation>
    <scope>FUNCTION</scope>
    <scope>DISRUPTION PHENOTYPE</scope>
</reference>
<reference key="12">
    <citation type="journal article" date="2014" name="Virulence">
        <title>Candida albicans VPS4 contributes differentially to epithelial and mucosal pathogenesis.</title>
        <authorList>
            <person name="Rane H.S."/>
            <person name="Hardison S."/>
            <person name="Botelho C."/>
            <person name="Bernardo S.M."/>
            <person name="Wormley F. Jr."/>
            <person name="Lee S.A."/>
        </authorList>
    </citation>
    <scope>FUNCTION</scope>
    <scope>DISRUPTION PHENOTYPE</scope>
</reference>
<feature type="chain" id="PRO_0000431935" description="Vacuolar protein sorting-associated protein 4">
    <location>
        <begin position="1"/>
        <end position="439"/>
    </location>
</feature>
<feature type="domain" description="MIT" evidence="2">
    <location>
        <begin position="8"/>
        <end position="75"/>
    </location>
</feature>
<feature type="region of interest" description="Disordered" evidence="4">
    <location>
        <begin position="76"/>
        <end position="113"/>
    </location>
</feature>
<feature type="compositionally biased region" description="Polar residues" evidence="4">
    <location>
        <begin position="80"/>
        <end position="93"/>
    </location>
</feature>
<feature type="binding site" evidence="3">
    <location>
        <begin position="175"/>
        <end position="182"/>
    </location>
    <ligand>
        <name>ATP</name>
        <dbReference type="ChEBI" id="CHEBI:30616"/>
    </ligand>
</feature>
<feature type="sequence variant" description="In allele: CaO19.11814.">
    <original>A</original>
    <variation>V</variation>
    <location>
        <position position="4"/>
    </location>
</feature>
<feature type="sequence variant" description="In allele: CaO19.11814.">
    <original>G</original>
    <variation>S</variation>
    <location>
        <position position="102"/>
    </location>
</feature>